<organism>
    <name type="scientific">Bacillus cereus (strain Q1)</name>
    <dbReference type="NCBI Taxonomy" id="361100"/>
    <lineage>
        <taxon>Bacteria</taxon>
        <taxon>Bacillati</taxon>
        <taxon>Bacillota</taxon>
        <taxon>Bacilli</taxon>
        <taxon>Bacillales</taxon>
        <taxon>Bacillaceae</taxon>
        <taxon>Bacillus</taxon>
        <taxon>Bacillus cereus group</taxon>
    </lineage>
</organism>
<dbReference type="EMBL" id="CP000227">
    <property type="protein sequence ID" value="ACM13881.1"/>
    <property type="molecule type" value="Genomic_DNA"/>
</dbReference>
<dbReference type="SMR" id="B9IUH1"/>
<dbReference type="KEGG" id="bcq:BCQ_3453"/>
<dbReference type="HOGENOM" id="CLU_148478_0_0_9"/>
<dbReference type="Proteomes" id="UP000000441">
    <property type="component" value="Chromosome"/>
</dbReference>
<dbReference type="GO" id="GO:0003729">
    <property type="term" value="F:mRNA binding"/>
    <property type="evidence" value="ECO:0007669"/>
    <property type="project" value="UniProtKB-UniRule"/>
</dbReference>
<dbReference type="GO" id="GO:0006547">
    <property type="term" value="P:L-histidine metabolic process"/>
    <property type="evidence" value="ECO:0007669"/>
    <property type="project" value="UniProtKB-UniRule"/>
</dbReference>
<dbReference type="GO" id="GO:0010628">
    <property type="term" value="P:positive regulation of gene expression"/>
    <property type="evidence" value="ECO:0007669"/>
    <property type="project" value="UniProtKB-UniRule"/>
</dbReference>
<dbReference type="FunFam" id="3.40.1510.10:FF:000001">
    <property type="entry name" value="Hut operon positive regulatory protein"/>
    <property type="match status" value="1"/>
</dbReference>
<dbReference type="Gene3D" id="3.40.1510.10">
    <property type="entry name" value="Hut operon regulatory protein HutP"/>
    <property type="match status" value="1"/>
</dbReference>
<dbReference type="HAMAP" id="MF_00779">
    <property type="entry name" value="HutP"/>
    <property type="match status" value="1"/>
</dbReference>
<dbReference type="InterPro" id="IPR015111">
    <property type="entry name" value="Regulatory_HutP"/>
</dbReference>
<dbReference type="InterPro" id="IPR023552">
    <property type="entry name" value="Regulatory_HutP_bacillales"/>
</dbReference>
<dbReference type="InterPro" id="IPR036482">
    <property type="entry name" value="Regulatory_HutP_sf"/>
</dbReference>
<dbReference type="NCBIfam" id="NF002838">
    <property type="entry name" value="PRK03065.1"/>
    <property type="match status" value="1"/>
</dbReference>
<dbReference type="Pfam" id="PF09021">
    <property type="entry name" value="HutP"/>
    <property type="match status" value="1"/>
</dbReference>
<dbReference type="SUPFAM" id="SSF111064">
    <property type="entry name" value="Hut operon positive regulatory protein HutP"/>
    <property type="match status" value="1"/>
</dbReference>
<evidence type="ECO:0000255" key="1">
    <source>
        <dbReference type="HAMAP-Rule" id="MF_00779"/>
    </source>
</evidence>
<proteinExistence type="inferred from homology"/>
<protein>
    <recommendedName>
        <fullName evidence="1">Hut operon positive regulatory protein</fullName>
    </recommendedName>
</protein>
<reference key="1">
    <citation type="journal article" date="2009" name="J. Bacteriol.">
        <title>Complete genome sequence of the extremophilic Bacillus cereus strain Q1 with industrial applications.</title>
        <authorList>
            <person name="Xiong Z."/>
            <person name="Jiang Y."/>
            <person name="Qi D."/>
            <person name="Lu H."/>
            <person name="Yang F."/>
            <person name="Yang J."/>
            <person name="Chen L."/>
            <person name="Sun L."/>
            <person name="Xu X."/>
            <person name="Xue Y."/>
            <person name="Zhu Y."/>
            <person name="Jin Q."/>
        </authorList>
    </citation>
    <scope>NUCLEOTIDE SEQUENCE [LARGE SCALE GENOMIC DNA]</scope>
    <source>
        <strain>Q1</strain>
    </source>
</reference>
<sequence>MLLQGTHRIGRMAMLLALADENESPVLSIPKGWKYCTGKVGSMNSQKVVAAMETAAKSNQVIETDVYRETHALYHAIMEALYGVTRGQIQLADVLRTVGLRFAIVRGTPYDGKKEGEWVAVALYGTIGAPVKGSEHEAIGLGINHI</sequence>
<accession>B9IUH1</accession>
<keyword id="KW-0010">Activator</keyword>
<keyword id="KW-0369">Histidine metabolism</keyword>
<keyword id="KW-0694">RNA-binding</keyword>
<keyword id="KW-0804">Transcription</keyword>
<keyword id="KW-0805">Transcription regulation</keyword>
<comment type="function">
    <text evidence="1">Antiterminator that binds to cis-acting regulatory sequences on the mRNA in the presence of histidine, thereby suppressing transcription termination and activating the hut operon for histidine utilization.</text>
</comment>
<comment type="subunit">
    <text evidence="1">Homohexamer.</text>
</comment>
<comment type="similarity">
    <text evidence="1">Belongs to the HutP family.</text>
</comment>
<feature type="chain" id="PRO_1000148463" description="Hut operon positive regulatory protein">
    <location>
        <begin position="1"/>
        <end position="146"/>
    </location>
</feature>
<name>HUTP_BACCQ</name>
<gene>
    <name evidence="1" type="primary">hutP</name>
    <name type="ordered locus">BCQ_3453</name>
</gene>